<evidence type="ECO:0000250" key="1"/>
<evidence type="ECO:0000250" key="2">
    <source>
        <dbReference type="UniProtKB" id="P41159"/>
    </source>
</evidence>
<evidence type="ECO:0000250" key="3">
    <source>
        <dbReference type="UniProtKB" id="P41160"/>
    </source>
</evidence>
<evidence type="ECO:0000250" key="4">
    <source>
        <dbReference type="UniProtKB" id="P50596"/>
    </source>
</evidence>
<evidence type="ECO:0000305" key="5"/>
<organism>
    <name type="scientific">Pan troglodytes</name>
    <name type="common">Chimpanzee</name>
    <dbReference type="NCBI Taxonomy" id="9598"/>
    <lineage>
        <taxon>Eukaryota</taxon>
        <taxon>Metazoa</taxon>
        <taxon>Chordata</taxon>
        <taxon>Craniata</taxon>
        <taxon>Vertebrata</taxon>
        <taxon>Euteleostomi</taxon>
        <taxon>Mammalia</taxon>
        <taxon>Eutheria</taxon>
        <taxon>Euarchontoglires</taxon>
        <taxon>Primates</taxon>
        <taxon>Haplorrhini</taxon>
        <taxon>Catarrhini</taxon>
        <taxon>Hominidae</taxon>
        <taxon>Pan</taxon>
    </lineage>
</organism>
<sequence>VPIQKVQDDTKTLIKTIVTRINDISHTQSVSSKQKVTGLDFIPGLHPILTLSKMDQTLAVYQQILTSMPSRNMIQISNDLENLRDLLHVLAFSKSCHLPWASGLETLDSLGGVLEASGYSTEVVALSRLQGSLQDMLWQLDLSPGC</sequence>
<gene>
    <name type="primary">LEP</name>
    <name type="synonym">OB</name>
</gene>
<accession>O02750</accession>
<feature type="chain" id="PRO_0000160606" description="Leptin">
    <location>
        <begin position="1"/>
        <end position="146"/>
    </location>
</feature>
<feature type="disulfide bond" evidence="1">
    <location>
        <begin position="96"/>
        <end position="146"/>
    </location>
</feature>
<dbReference type="EMBL" id="U96450">
    <property type="protein sequence ID" value="AAB54023.1"/>
    <property type="molecule type" value="mRNA"/>
</dbReference>
<dbReference type="RefSeq" id="NP_001180601.1">
    <property type="nucleotide sequence ID" value="NM_001193672.1"/>
</dbReference>
<dbReference type="SMR" id="O02750"/>
<dbReference type="STRING" id="9598.ENSPTRP00000072740"/>
<dbReference type="PaxDb" id="9598-ENSPTRP00000033657"/>
<dbReference type="GeneID" id="449638"/>
<dbReference type="KEGG" id="ptr:449638"/>
<dbReference type="CTD" id="3952"/>
<dbReference type="eggNOG" id="ENOG502S5K5">
    <property type="taxonomic scope" value="Eukaryota"/>
</dbReference>
<dbReference type="InParanoid" id="O02750"/>
<dbReference type="OrthoDB" id="1628at9604"/>
<dbReference type="Proteomes" id="UP000002277">
    <property type="component" value="Unplaced"/>
</dbReference>
<dbReference type="GO" id="GO:0005615">
    <property type="term" value="C:extracellular space"/>
    <property type="evidence" value="ECO:0000250"/>
    <property type="project" value="HGNC-UCL"/>
</dbReference>
<dbReference type="GO" id="GO:0005179">
    <property type="term" value="F:hormone activity"/>
    <property type="evidence" value="ECO:0000318"/>
    <property type="project" value="GO_Central"/>
</dbReference>
<dbReference type="GO" id="GO:0051428">
    <property type="term" value="F:peptide hormone receptor binding"/>
    <property type="evidence" value="ECO:0000318"/>
    <property type="project" value="GO_Central"/>
</dbReference>
<dbReference type="GO" id="GO:1990051">
    <property type="term" value="P:activation of protein kinase C activity"/>
    <property type="evidence" value="ECO:0000250"/>
    <property type="project" value="UniProtKB"/>
</dbReference>
<dbReference type="GO" id="GO:0008343">
    <property type="term" value="P:adult feeding behavior"/>
    <property type="evidence" value="ECO:0000250"/>
    <property type="project" value="HGNC-UCL"/>
</dbReference>
<dbReference type="GO" id="GO:0098868">
    <property type="term" value="P:bone growth"/>
    <property type="evidence" value="ECO:0000250"/>
    <property type="project" value="UniProtKB"/>
</dbReference>
<dbReference type="GO" id="GO:0044320">
    <property type="term" value="P:cellular response to leptin stimulus"/>
    <property type="evidence" value="ECO:0000250"/>
    <property type="project" value="UniProtKB"/>
</dbReference>
<dbReference type="GO" id="GO:0006112">
    <property type="term" value="P:energy reserve metabolic process"/>
    <property type="evidence" value="ECO:0000318"/>
    <property type="project" value="GO_Central"/>
</dbReference>
<dbReference type="GO" id="GO:0050892">
    <property type="term" value="P:intestinal absorption"/>
    <property type="evidence" value="ECO:0000250"/>
    <property type="project" value="UniProtKB"/>
</dbReference>
<dbReference type="GO" id="GO:0033210">
    <property type="term" value="P:leptin-mediated signaling pathway"/>
    <property type="evidence" value="ECO:0000250"/>
    <property type="project" value="UniProtKB"/>
</dbReference>
<dbReference type="GO" id="GO:0006629">
    <property type="term" value="P:lipid metabolic process"/>
    <property type="evidence" value="ECO:0000318"/>
    <property type="project" value="GO_Central"/>
</dbReference>
<dbReference type="GO" id="GO:0032099">
    <property type="term" value="P:negative regulation of appetite"/>
    <property type="evidence" value="ECO:0000250"/>
    <property type="project" value="HGNC-UCL"/>
</dbReference>
<dbReference type="GO" id="GO:0038108">
    <property type="term" value="P:negative regulation of appetite by leptin-mediated signaling pathway"/>
    <property type="evidence" value="ECO:0000250"/>
    <property type="project" value="UniProtKB"/>
</dbReference>
<dbReference type="GO" id="GO:0010507">
    <property type="term" value="P:negative regulation of autophagy"/>
    <property type="evidence" value="ECO:0000250"/>
    <property type="project" value="UniProtKB"/>
</dbReference>
<dbReference type="GO" id="GO:0046325">
    <property type="term" value="P:negative regulation of D-glucose import"/>
    <property type="evidence" value="ECO:0000250"/>
    <property type="project" value="UniProtKB"/>
</dbReference>
<dbReference type="GO" id="GO:0006909">
    <property type="term" value="P:phagocytosis"/>
    <property type="evidence" value="ECO:0000250"/>
    <property type="project" value="UniProtKB"/>
</dbReference>
<dbReference type="GO" id="GO:0032735">
    <property type="term" value="P:positive regulation of interleukin-12 production"/>
    <property type="evidence" value="ECO:0000250"/>
    <property type="project" value="UniProtKB"/>
</dbReference>
<dbReference type="GO" id="GO:0032755">
    <property type="term" value="P:positive regulation of interleukin-6 production"/>
    <property type="evidence" value="ECO:0000250"/>
    <property type="project" value="UniProtKB"/>
</dbReference>
<dbReference type="GO" id="GO:0032757">
    <property type="term" value="P:positive regulation of interleukin-8 production"/>
    <property type="evidence" value="ECO:0000250"/>
    <property type="project" value="UniProtKB"/>
</dbReference>
<dbReference type="GO" id="GO:0043410">
    <property type="term" value="P:positive regulation of MAPK cascade"/>
    <property type="evidence" value="ECO:0000250"/>
    <property type="project" value="UniProtKB"/>
</dbReference>
<dbReference type="GO" id="GO:1900745">
    <property type="term" value="P:positive regulation of p38MAPK cascade"/>
    <property type="evidence" value="ECO:0000250"/>
    <property type="project" value="UniProtKB"/>
</dbReference>
<dbReference type="GO" id="GO:0051897">
    <property type="term" value="P:positive regulation of phosphatidylinositol 3-kinase/protein kinase B signal transduction"/>
    <property type="evidence" value="ECO:0000250"/>
    <property type="project" value="UniProtKB"/>
</dbReference>
<dbReference type="GO" id="GO:0046427">
    <property type="term" value="P:positive regulation of receptor signaling pathway via JAK-STAT"/>
    <property type="evidence" value="ECO:0000250"/>
    <property type="project" value="UniProtKB"/>
</dbReference>
<dbReference type="GO" id="GO:0042102">
    <property type="term" value="P:positive regulation of T cell proliferation"/>
    <property type="evidence" value="ECO:0000250"/>
    <property type="project" value="UniProtKB"/>
</dbReference>
<dbReference type="GO" id="GO:0032008">
    <property type="term" value="P:positive regulation of TOR signaling"/>
    <property type="evidence" value="ECO:0000250"/>
    <property type="project" value="UniProtKB"/>
</dbReference>
<dbReference type="GO" id="GO:0032760">
    <property type="term" value="P:positive regulation of tumor necrosis factor production"/>
    <property type="evidence" value="ECO:0000250"/>
    <property type="project" value="UniProtKB"/>
</dbReference>
<dbReference type="GO" id="GO:0032310">
    <property type="term" value="P:prostaglandin secretion"/>
    <property type="evidence" value="ECO:0000250"/>
    <property type="project" value="UniProtKB"/>
</dbReference>
<dbReference type="GO" id="GO:0045765">
    <property type="term" value="P:regulation of angiogenesis"/>
    <property type="evidence" value="ECO:0000250"/>
    <property type="project" value="UniProtKB"/>
</dbReference>
<dbReference type="GO" id="GO:0046850">
    <property type="term" value="P:regulation of bone remodeling"/>
    <property type="evidence" value="ECO:0000250"/>
    <property type="project" value="UniProtKB"/>
</dbReference>
<dbReference type="GO" id="GO:0090335">
    <property type="term" value="P:regulation of brown fat cell differentiation"/>
    <property type="evidence" value="ECO:0000250"/>
    <property type="project" value="UniProtKB"/>
</dbReference>
<dbReference type="GO" id="GO:0051726">
    <property type="term" value="P:regulation of cell cycle"/>
    <property type="evidence" value="ECO:0000250"/>
    <property type="project" value="UniProtKB"/>
</dbReference>
<dbReference type="GO" id="GO:1900015">
    <property type="term" value="P:regulation of cytokine production involved in inflammatory response"/>
    <property type="evidence" value="ECO:0000250"/>
    <property type="project" value="UniProtKB"/>
</dbReference>
<dbReference type="GO" id="GO:0001936">
    <property type="term" value="P:regulation of endothelial cell proliferation"/>
    <property type="evidence" value="ECO:0000250"/>
    <property type="project" value="UniProtKB"/>
</dbReference>
<dbReference type="GO" id="GO:0032814">
    <property type="term" value="P:regulation of natural killer cell activation"/>
    <property type="evidence" value="ECO:0000250"/>
    <property type="project" value="UniProtKB"/>
</dbReference>
<dbReference type="GO" id="GO:0042269">
    <property type="term" value="P:regulation of natural killer cell mediated cytotoxicity"/>
    <property type="evidence" value="ECO:0000250"/>
    <property type="project" value="UniProtKB"/>
</dbReference>
<dbReference type="GO" id="GO:0032817">
    <property type="term" value="P:regulation of natural killer cell proliferation"/>
    <property type="evidence" value="ECO:0000250"/>
    <property type="project" value="UniProtKB"/>
</dbReference>
<dbReference type="GO" id="GO:0050999">
    <property type="term" value="P:regulation of nitric-oxide synthase activity"/>
    <property type="evidence" value="ECO:0000250"/>
    <property type="project" value="UniProtKB"/>
</dbReference>
<dbReference type="GO" id="GO:0032868">
    <property type="term" value="P:response to insulin"/>
    <property type="evidence" value="ECO:0000318"/>
    <property type="project" value="GO_Central"/>
</dbReference>
<dbReference type="GO" id="GO:0019953">
    <property type="term" value="P:sexual reproduction"/>
    <property type="evidence" value="ECO:0000250"/>
    <property type="project" value="UniProtKB"/>
</dbReference>
<dbReference type="GO" id="GO:0030217">
    <property type="term" value="P:T cell differentiation"/>
    <property type="evidence" value="ECO:0000250"/>
    <property type="project" value="UniProtKB"/>
</dbReference>
<dbReference type="FunFam" id="1.20.1250.10:FF:000008">
    <property type="entry name" value="Leptin"/>
    <property type="match status" value="1"/>
</dbReference>
<dbReference type="Gene3D" id="1.20.1250.10">
    <property type="match status" value="1"/>
</dbReference>
<dbReference type="InterPro" id="IPR009079">
    <property type="entry name" value="4_helix_cytokine-like_core"/>
</dbReference>
<dbReference type="InterPro" id="IPR000065">
    <property type="entry name" value="Leptin"/>
</dbReference>
<dbReference type="PANTHER" id="PTHR11724">
    <property type="entry name" value="LEPTIN"/>
    <property type="match status" value="1"/>
</dbReference>
<dbReference type="PANTHER" id="PTHR11724:SF1">
    <property type="entry name" value="LEPTIN"/>
    <property type="match status" value="1"/>
</dbReference>
<dbReference type="Pfam" id="PF02024">
    <property type="entry name" value="Leptin"/>
    <property type="match status" value="1"/>
</dbReference>
<dbReference type="PIRSF" id="PIRSF001837">
    <property type="entry name" value="Leptin"/>
    <property type="match status" value="1"/>
</dbReference>
<dbReference type="PRINTS" id="PR00495">
    <property type="entry name" value="LEPTIN"/>
</dbReference>
<dbReference type="SUPFAM" id="SSF47266">
    <property type="entry name" value="4-helical cytokines"/>
    <property type="match status" value="1"/>
</dbReference>
<keyword id="KW-1015">Disulfide bond</keyword>
<keyword id="KW-0550">Obesity</keyword>
<keyword id="KW-1185">Reference proteome</keyword>
<keyword id="KW-0964">Secreted</keyword>
<reference key="1">
    <citation type="submission" date="1997-04" db="EMBL/GenBank/DDBJ databases">
        <title>Cloning of obese genes from different species: a comparison of the gene structures and the sequences of the obese gene products, leptin.</title>
        <authorList>
            <person name="Schoner B."/>
            <person name="Basinski M.B."/>
            <person name="Smith D.P."/>
            <person name="Hsiung H.M."/>
            <person name="Zhang X."/>
            <person name="Rockey P.K."/>
            <person name="Rosteck P.R."/>
        </authorList>
    </citation>
    <scope>NUCLEOTIDE SEQUENCE [MRNA]</scope>
</reference>
<protein>
    <recommendedName>
        <fullName>Leptin</fullName>
    </recommendedName>
    <alternativeName>
        <fullName>Obesity factor</fullName>
    </alternativeName>
</protein>
<comment type="function">
    <text evidence="2 3 4">Key player in the regulation of energy balance and body weight control. Once released into the circulation, has central and peripheral effects by binding LEPR, found in many tissues, which results in the activation of several major signaling pathways (By similarity). In the hypothalamus, acts as an appetite-regulating factor that induces a decrease in food intake and an increase in energy consumption by inducing anorexinogenic factors and suppressing orexigenic neuropeptides, also regulates bone mass and secretion of hypothalamo-pituitary-adrenal hormones. In the periphery, increases basal metabolism, influences reproductive function, regulates pancreatic beta-cell function and insulin secretion, is pro-angiogenic for endothelial cell and affects innate and adaptive immunity (By similarity). In the arcuate nucleus of the hypothalamus, activates by depolarization POMC neurons inducing FOS and SOCS3 expression to release anorexigenic peptides and inhibits by hyperpolarization NPY neurons inducing SOCS3 with a consequent reduction on release of orexigenic peptides (By similarity). In addition to its known satiety inducing effect, has a modulatory role in nutrient absorption. In the intestine, reduces glucose absorption by enterocytes by activating PKC and leading to a sequential activation of p38, PI3K and ERK signaling pathways which exerts an inhibitory effect on glucose absorption (By similarity). Acts as a growth factor on certain tissues, through the activation of different signaling pathways increases expression of genes involved in cell cycle regulation such as CCND1, via JAK2-STAT3 pathway, or VEGFA, via MAPK1/3 and PI3K-AKT1 pathways (By similarity). May also play an apoptotic role via JAK2-STAT3 pathway and up-regulation of BIRC5 expression. Pro-angiogenic, has mitogenic activity on vascular endothelial cells and plays a role in matrix remodeling by regulating the expression of matrix metalloproteinases (MMPs) and tissue inhibitors of metalloproteinases (TIMPs). In innate immunity, modulates the activity and function of neutrophils by increasing chemotaxis and the secretion of oxygen radicals. Increases phagocytosis by macrophages and enhances secretion of pro-inflammatory mediators. Increases cytotoxic ability of NK cells. Plays a pro-inflammatory role, in synergy with IL1B, by inducing NOS2 which promotes the production of IL6, IL8 and Prostaglandin E2, through a signaling pathway that involves JAK2, PI3K, MAP2K1/MEK1 and MAPK14/p38 (By similarity). In adaptive immunity, promotes the switch of memory T-cells towards T helper-1 cell immune responses (By similarity). Increases CD4(+)CD25(-) T-cell proliferation and reduces autophagy during TCR (T-cell receptor) stimulation, through MTOR signaling pathway activation and BCL2 up-regulation (By similarity).</text>
</comment>
<comment type="subcellular location">
    <subcellularLocation>
        <location evidence="2">Secreted</location>
    </subcellularLocation>
</comment>
<comment type="similarity">
    <text evidence="5">Belongs to the leptin family.</text>
</comment>
<name>LEP_PANTR</name>
<proteinExistence type="evidence at transcript level"/>